<sequence>VLSPGDKSNIKAAWGKIGGQAPQYGAEALERMFLSFPTTKTYFPHFDMSHGSAQIQAHGKKVADALSTAVGHLDDLPTALSALSDLHAHKLRVDPANFKLLSHCILVTLACHHPGDFTPEIHASLDKFLANVSTVLTSKYR</sequence>
<comment type="function">
    <text>Involved in oxygen transport from the lung to the various peripheral tissues.</text>
</comment>
<comment type="function">
    <molecule>Hemopressin</molecule>
    <text evidence="2">Hemopressin acts as an antagonist peptide of the cannabinoid receptor CNR1. Hemopressin-binding efficiently blocks cannabinoid receptor CNR1 and subsequent signaling.</text>
</comment>
<comment type="subunit">
    <text>Heterotetramer of two alpha chains and two beta chains.</text>
</comment>
<comment type="tissue specificity">
    <text>Red blood cells.</text>
</comment>
<comment type="similarity">
    <text evidence="4">Belongs to the globin family.</text>
</comment>
<dbReference type="PIR" id="A02263">
    <property type="entry name" value="HATS"/>
</dbReference>
<dbReference type="SMR" id="P01941"/>
<dbReference type="GO" id="GO:0072562">
    <property type="term" value="C:blood microparticle"/>
    <property type="evidence" value="ECO:0007669"/>
    <property type="project" value="TreeGrafter"/>
</dbReference>
<dbReference type="GO" id="GO:0031838">
    <property type="term" value="C:haptoglobin-hemoglobin complex"/>
    <property type="evidence" value="ECO:0007669"/>
    <property type="project" value="TreeGrafter"/>
</dbReference>
<dbReference type="GO" id="GO:0005833">
    <property type="term" value="C:hemoglobin complex"/>
    <property type="evidence" value="ECO:0007669"/>
    <property type="project" value="InterPro"/>
</dbReference>
<dbReference type="GO" id="GO:0031720">
    <property type="term" value="F:haptoglobin binding"/>
    <property type="evidence" value="ECO:0007669"/>
    <property type="project" value="TreeGrafter"/>
</dbReference>
<dbReference type="GO" id="GO:0020037">
    <property type="term" value="F:heme binding"/>
    <property type="evidence" value="ECO:0007669"/>
    <property type="project" value="InterPro"/>
</dbReference>
<dbReference type="GO" id="GO:0005506">
    <property type="term" value="F:iron ion binding"/>
    <property type="evidence" value="ECO:0007669"/>
    <property type="project" value="InterPro"/>
</dbReference>
<dbReference type="GO" id="GO:0043177">
    <property type="term" value="F:organic acid binding"/>
    <property type="evidence" value="ECO:0007669"/>
    <property type="project" value="TreeGrafter"/>
</dbReference>
<dbReference type="GO" id="GO:0019825">
    <property type="term" value="F:oxygen binding"/>
    <property type="evidence" value="ECO:0007669"/>
    <property type="project" value="InterPro"/>
</dbReference>
<dbReference type="GO" id="GO:0005344">
    <property type="term" value="F:oxygen carrier activity"/>
    <property type="evidence" value="ECO:0007669"/>
    <property type="project" value="UniProtKB-KW"/>
</dbReference>
<dbReference type="GO" id="GO:0004601">
    <property type="term" value="F:peroxidase activity"/>
    <property type="evidence" value="ECO:0007669"/>
    <property type="project" value="TreeGrafter"/>
</dbReference>
<dbReference type="GO" id="GO:0042744">
    <property type="term" value="P:hydrogen peroxide catabolic process"/>
    <property type="evidence" value="ECO:0007669"/>
    <property type="project" value="TreeGrafter"/>
</dbReference>
<dbReference type="CDD" id="cd08927">
    <property type="entry name" value="Hb-alpha-like"/>
    <property type="match status" value="1"/>
</dbReference>
<dbReference type="FunFam" id="1.10.490.10:FF:000002">
    <property type="entry name" value="Hemoglobin subunit alpha"/>
    <property type="match status" value="1"/>
</dbReference>
<dbReference type="Gene3D" id="1.10.490.10">
    <property type="entry name" value="Globins"/>
    <property type="match status" value="1"/>
</dbReference>
<dbReference type="InterPro" id="IPR000971">
    <property type="entry name" value="Globin"/>
</dbReference>
<dbReference type="InterPro" id="IPR009050">
    <property type="entry name" value="Globin-like_sf"/>
</dbReference>
<dbReference type="InterPro" id="IPR012292">
    <property type="entry name" value="Globin/Proto"/>
</dbReference>
<dbReference type="InterPro" id="IPR002338">
    <property type="entry name" value="Hemoglobin_a-typ"/>
</dbReference>
<dbReference type="InterPro" id="IPR050056">
    <property type="entry name" value="Hemoglobin_oxygen_transport"/>
</dbReference>
<dbReference type="InterPro" id="IPR002339">
    <property type="entry name" value="Hemoglobin_pi"/>
</dbReference>
<dbReference type="PANTHER" id="PTHR11442">
    <property type="entry name" value="HEMOGLOBIN FAMILY MEMBER"/>
    <property type="match status" value="1"/>
</dbReference>
<dbReference type="PANTHER" id="PTHR11442:SF48">
    <property type="entry name" value="HEMOGLOBIN SUBUNIT ALPHA"/>
    <property type="match status" value="1"/>
</dbReference>
<dbReference type="Pfam" id="PF00042">
    <property type="entry name" value="Globin"/>
    <property type="match status" value="1"/>
</dbReference>
<dbReference type="PRINTS" id="PR00612">
    <property type="entry name" value="ALPHAHAEM"/>
</dbReference>
<dbReference type="PRINTS" id="PR00815">
    <property type="entry name" value="PIHAEM"/>
</dbReference>
<dbReference type="SUPFAM" id="SSF46458">
    <property type="entry name" value="Globin-like"/>
    <property type="match status" value="1"/>
</dbReference>
<dbReference type="PROSITE" id="PS01033">
    <property type="entry name" value="GLOBIN"/>
    <property type="match status" value="1"/>
</dbReference>
<feature type="chain" id="PRO_0000052793" description="Hemoglobin subunit alpha">
    <location>
        <begin position="1"/>
        <end position="141"/>
    </location>
</feature>
<feature type="peptide" id="PRO_0000455955" description="Hemopressin" evidence="2">
    <location>
        <begin position="95"/>
        <end position="103"/>
    </location>
</feature>
<feature type="domain" description="Globin" evidence="4">
    <location>
        <begin position="1"/>
        <end position="141"/>
    </location>
</feature>
<feature type="binding site" evidence="4">
    <location>
        <position position="58"/>
    </location>
    <ligand>
        <name>O2</name>
        <dbReference type="ChEBI" id="CHEBI:15379"/>
    </ligand>
</feature>
<feature type="binding site" description="proximal binding residue" evidence="4">
    <location>
        <position position="87"/>
    </location>
    <ligand>
        <name>heme b</name>
        <dbReference type="ChEBI" id="CHEBI:60344"/>
    </ligand>
    <ligandPart>
        <name>Fe</name>
        <dbReference type="ChEBI" id="CHEBI:18248"/>
    </ligandPart>
</feature>
<feature type="modified residue" description="Phosphoserine" evidence="3">
    <location>
        <position position="3"/>
    </location>
</feature>
<feature type="modified residue" description="N6-succinyllysine" evidence="1">
    <location>
        <position position="7"/>
    </location>
</feature>
<feature type="modified residue" description="N6-succinyllysine" evidence="1">
    <location>
        <position position="11"/>
    </location>
</feature>
<feature type="modified residue" description="N6-acetyllysine; alternate" evidence="3">
    <location>
        <position position="16"/>
    </location>
</feature>
<feature type="modified residue" description="N6-succinyllysine; alternate" evidence="1">
    <location>
        <position position="16"/>
    </location>
</feature>
<feature type="modified residue" description="Phosphotyrosine" evidence="3">
    <location>
        <position position="24"/>
    </location>
</feature>
<feature type="modified residue" description="Phosphoserine" evidence="3">
    <location>
        <position position="35"/>
    </location>
</feature>
<feature type="modified residue" description="N6-succinyllysine" evidence="1">
    <location>
        <position position="40"/>
    </location>
</feature>
<feature type="modified residue" description="Phosphoserine" evidence="3">
    <location>
        <position position="49"/>
    </location>
</feature>
<feature type="modified residue" description="Phosphoserine" evidence="1">
    <location>
        <position position="102"/>
    </location>
</feature>
<feature type="modified residue" description="Phosphothreonine" evidence="1">
    <location>
        <position position="108"/>
    </location>
</feature>
<feature type="modified residue" description="Phosphoserine" evidence="1">
    <location>
        <position position="124"/>
    </location>
</feature>
<feature type="modified residue" description="Phosphothreonine" evidence="1">
    <location>
        <position position="134"/>
    </location>
</feature>
<feature type="modified residue" description="Phosphothreonine" evidence="1">
    <location>
        <position position="137"/>
    </location>
</feature>
<feature type="modified residue" description="Phosphoserine" evidence="1">
    <location>
        <position position="138"/>
    </location>
</feature>
<reference key="1">
    <citation type="journal article" date="1977" name="J. Biochem.">
        <title>Amino acid sequences of the aplpha and beta chains of adult hemoglobin of the tupai, Tupaia glis.</title>
        <authorList>
            <person name="Maita T."/>
            <person name="Tanaka E."/>
            <person name="Goodman M."/>
            <person name="Matsuda G."/>
        </authorList>
    </citation>
    <scope>PROTEIN SEQUENCE</scope>
</reference>
<keyword id="KW-0007">Acetylation</keyword>
<keyword id="KW-0903">Direct protein sequencing</keyword>
<keyword id="KW-0349">Heme</keyword>
<keyword id="KW-0408">Iron</keyword>
<keyword id="KW-0479">Metal-binding</keyword>
<keyword id="KW-0561">Oxygen transport</keyword>
<keyword id="KW-0597">Phosphoprotein</keyword>
<keyword id="KW-0813">Transport</keyword>
<name>HBA_TUPGL</name>
<evidence type="ECO:0000250" key="1">
    <source>
        <dbReference type="UniProtKB" id="P01942"/>
    </source>
</evidence>
<evidence type="ECO:0000250" key="2">
    <source>
        <dbReference type="UniProtKB" id="P01946"/>
    </source>
</evidence>
<evidence type="ECO:0000250" key="3">
    <source>
        <dbReference type="UniProtKB" id="P69905"/>
    </source>
</evidence>
<evidence type="ECO:0000255" key="4">
    <source>
        <dbReference type="PROSITE-ProRule" id="PRU00238"/>
    </source>
</evidence>
<accession>P01941</accession>
<organism>
    <name type="scientific">Tupaia glis</name>
    <name type="common">Common tree shrew</name>
    <name type="synonym">Sorex glis</name>
    <dbReference type="NCBI Taxonomy" id="9395"/>
    <lineage>
        <taxon>Eukaryota</taxon>
        <taxon>Metazoa</taxon>
        <taxon>Chordata</taxon>
        <taxon>Craniata</taxon>
        <taxon>Vertebrata</taxon>
        <taxon>Euteleostomi</taxon>
        <taxon>Mammalia</taxon>
        <taxon>Eutheria</taxon>
        <taxon>Euarchontoglires</taxon>
        <taxon>Scandentia</taxon>
        <taxon>Tupaiidae</taxon>
        <taxon>Tupaia</taxon>
    </lineage>
</organism>
<proteinExistence type="evidence at protein level"/>
<protein>
    <recommendedName>
        <fullName>Hemoglobin subunit alpha</fullName>
    </recommendedName>
    <alternativeName>
        <fullName>Alpha-globin</fullName>
    </alternativeName>
    <alternativeName>
        <fullName>Hemoglobin alpha chain</fullName>
    </alternativeName>
    <component>
        <recommendedName>
            <fullName evidence="2">Hemopressin</fullName>
        </recommendedName>
    </component>
</protein>
<gene>
    <name type="primary">HBA</name>
</gene>